<keyword id="KW-0342">GTP-binding</keyword>
<keyword id="KW-0547">Nucleotide-binding</keyword>
<keyword id="KW-0539">Nucleus</keyword>
<keyword id="KW-0653">Protein transport</keyword>
<keyword id="KW-0813">Transport</keyword>
<accession>P38543</accession>
<feature type="chain" id="PRO_0000208712" description="GTP-binding nuclear protein Ran">
    <location>
        <begin position="1"/>
        <end position="226"/>
    </location>
</feature>
<feature type="domain" description="Small GTPase Ran-type" evidence="3">
    <location>
        <begin position="3"/>
        <end position="184"/>
    </location>
</feature>
<feature type="region of interest" description="Switch-I" evidence="3">
    <location>
        <begin position="33"/>
        <end position="41"/>
    </location>
</feature>
<feature type="region of interest" description="Switch-II" evidence="3">
    <location>
        <begin position="70"/>
        <end position="86"/>
    </location>
</feature>
<feature type="binding site" evidence="2">
    <location>
        <begin position="14"/>
        <end position="21"/>
    </location>
    <ligand>
        <name>GTP</name>
        <dbReference type="ChEBI" id="CHEBI:37565"/>
    </ligand>
</feature>
<feature type="binding site" evidence="2">
    <location>
        <position position="70"/>
    </location>
    <ligand>
        <name>GTP</name>
        <dbReference type="ChEBI" id="CHEBI:37565"/>
    </ligand>
</feature>
<feature type="binding site" evidence="2">
    <location>
        <begin position="135"/>
        <end position="138"/>
    </location>
    <ligand>
        <name>GTP</name>
        <dbReference type="ChEBI" id="CHEBI:37565"/>
    </ligand>
</feature>
<feature type="binding site" evidence="2">
    <location>
        <begin position="163"/>
        <end position="165"/>
    </location>
    <ligand>
        <name>GTP</name>
        <dbReference type="ChEBI" id="CHEBI:37565"/>
    </ligand>
</feature>
<comment type="function">
    <text evidence="1">GTP-binding protein involved in nucleocytoplasmic transport. Required for the import of protein into the nucleus and also for RNA export. Involved in chromatin condensation and control of cell cycle (By similarity).</text>
</comment>
<comment type="subunit">
    <text evidence="2">Found in a nuclear export complex with RanGTP, exportin and pre-miRNA (By similarity).</text>
</comment>
<comment type="subcellular location">
    <subcellularLocation>
        <location>Nucleus</location>
    </subcellularLocation>
</comment>
<comment type="similarity">
    <text evidence="3 4">Belongs to the small GTPase superfamily. Ran family.</text>
</comment>
<name>RAN_GIAIN</name>
<reference key="1">
    <citation type="journal article" date="1994" name="J. Biol. Chem.">
        <title>Molecular cloning and characterization of a ras-related gene of ran/tc4/spi1 subfamily in Giardia lamblia.</title>
        <authorList>
            <person name="Chen L.-M."/>
            <person name="Chern Y."/>
            <person name="Ong S.-J."/>
            <person name="Tai J.-H."/>
        </authorList>
    </citation>
    <scope>NUCLEOTIDE SEQUENCE [GENOMIC DNA]</scope>
    <source>
        <strain>ATCC 30957 / WB</strain>
    </source>
</reference>
<dbReference type="EMBL" id="U02589">
    <property type="protein sequence ID" value="AAA21426.1"/>
    <property type="molecule type" value="Genomic_DNA"/>
</dbReference>
<dbReference type="RefSeq" id="XP_001705159.1">
    <property type="nucleotide sequence ID" value="XM_001705107.1"/>
</dbReference>
<dbReference type="SMR" id="P38543"/>
<dbReference type="GeneID" id="5698010"/>
<dbReference type="KEGG" id="gla:GL50803_0015869"/>
<dbReference type="VEuPathDB" id="GiardiaDB:DHA2_15869"/>
<dbReference type="VEuPathDB" id="GiardiaDB:GL50581_2747"/>
<dbReference type="VEuPathDB" id="GiardiaDB:GL50803_0015869"/>
<dbReference type="VEuPathDB" id="GiardiaDB:QR46_3128"/>
<dbReference type="eggNOG" id="KOG0096">
    <property type="taxonomic scope" value="Eukaryota"/>
</dbReference>
<dbReference type="OMA" id="FNAWDTA"/>
<dbReference type="OrthoDB" id="48625at2759"/>
<dbReference type="GO" id="GO:0005737">
    <property type="term" value="C:cytoplasm"/>
    <property type="evidence" value="ECO:0007669"/>
    <property type="project" value="TreeGrafter"/>
</dbReference>
<dbReference type="GO" id="GO:0005634">
    <property type="term" value="C:nucleus"/>
    <property type="evidence" value="ECO:0007669"/>
    <property type="project" value="UniProtKB-SubCell"/>
</dbReference>
<dbReference type="GO" id="GO:0005525">
    <property type="term" value="F:GTP binding"/>
    <property type="evidence" value="ECO:0007669"/>
    <property type="project" value="UniProtKB-KW"/>
</dbReference>
<dbReference type="GO" id="GO:0003924">
    <property type="term" value="F:GTPase activity"/>
    <property type="evidence" value="ECO:0007669"/>
    <property type="project" value="InterPro"/>
</dbReference>
<dbReference type="GO" id="GO:0006606">
    <property type="term" value="P:protein import into nucleus"/>
    <property type="evidence" value="ECO:0007669"/>
    <property type="project" value="TreeGrafter"/>
</dbReference>
<dbReference type="GO" id="GO:0000054">
    <property type="term" value="P:ribosomal subunit export from nucleus"/>
    <property type="evidence" value="ECO:0007669"/>
    <property type="project" value="TreeGrafter"/>
</dbReference>
<dbReference type="FunFam" id="3.40.50.300:FF:001447">
    <property type="entry name" value="Ras-related protein Rab-1B"/>
    <property type="match status" value="1"/>
</dbReference>
<dbReference type="Gene3D" id="3.40.50.300">
    <property type="entry name" value="P-loop containing nucleotide triphosphate hydrolases"/>
    <property type="match status" value="1"/>
</dbReference>
<dbReference type="InterPro" id="IPR027417">
    <property type="entry name" value="P-loop_NTPase"/>
</dbReference>
<dbReference type="InterPro" id="IPR002041">
    <property type="entry name" value="Ran_GTPase"/>
</dbReference>
<dbReference type="InterPro" id="IPR005225">
    <property type="entry name" value="Small_GTP-bd"/>
</dbReference>
<dbReference type="InterPro" id="IPR001806">
    <property type="entry name" value="Small_GTPase"/>
</dbReference>
<dbReference type="NCBIfam" id="TIGR00231">
    <property type="entry name" value="small_GTP"/>
    <property type="match status" value="1"/>
</dbReference>
<dbReference type="PANTHER" id="PTHR24071:SF0">
    <property type="entry name" value="GTP-BINDING NUCLEAR PROTEIN RAN"/>
    <property type="match status" value="1"/>
</dbReference>
<dbReference type="PANTHER" id="PTHR24071">
    <property type="entry name" value="RAN GTPASE"/>
    <property type="match status" value="1"/>
</dbReference>
<dbReference type="Pfam" id="PF00071">
    <property type="entry name" value="Ras"/>
    <property type="match status" value="1"/>
</dbReference>
<dbReference type="PRINTS" id="PR00627">
    <property type="entry name" value="GTPRANTC4"/>
</dbReference>
<dbReference type="SMART" id="SM00175">
    <property type="entry name" value="RAB"/>
    <property type="match status" value="1"/>
</dbReference>
<dbReference type="SMART" id="SM00176">
    <property type="entry name" value="RAN"/>
    <property type="match status" value="1"/>
</dbReference>
<dbReference type="SMART" id="SM00173">
    <property type="entry name" value="RAS"/>
    <property type="match status" value="1"/>
</dbReference>
<dbReference type="SMART" id="SM00174">
    <property type="entry name" value="RHO"/>
    <property type="match status" value="1"/>
</dbReference>
<dbReference type="SUPFAM" id="SSF52540">
    <property type="entry name" value="P-loop containing nucleoside triphosphate hydrolases"/>
    <property type="match status" value="1"/>
</dbReference>
<dbReference type="PROSITE" id="PS51418">
    <property type="entry name" value="RAN"/>
    <property type="match status" value="1"/>
</dbReference>
<proteinExistence type="inferred from homology"/>
<protein>
    <recommendedName>
        <fullName>GTP-binding nuclear protein Ran</fullName>
    </recommendedName>
    <alternativeName>
        <fullName>GTPase Ran</fullName>
    </alternativeName>
    <alternativeName>
        <fullName>Ras-like protein TC4</fullName>
    </alternativeName>
</protein>
<organism>
    <name type="scientific">Giardia intestinalis</name>
    <name type="common">Giardia lamblia</name>
    <dbReference type="NCBI Taxonomy" id="5741"/>
    <lineage>
        <taxon>Eukaryota</taxon>
        <taxon>Metamonada</taxon>
        <taxon>Diplomonadida</taxon>
        <taxon>Hexamitidae</taxon>
        <taxon>Giardiinae</taxon>
        <taxon>Giardia</taxon>
    </lineage>
</organism>
<evidence type="ECO:0000250" key="1"/>
<evidence type="ECO:0000250" key="2">
    <source>
        <dbReference type="UniProtKB" id="P62825"/>
    </source>
</evidence>
<evidence type="ECO:0000255" key="3">
    <source>
        <dbReference type="PROSITE-ProRule" id="PRU00752"/>
    </source>
</evidence>
<evidence type="ECO:0000305" key="4"/>
<sequence>MSDPISFKVILVGDGATGKTTFVTRHITGEFRKQYISTIGVEIRQLPFYVAGQSCPNGREVLLNVHDTAGQEKFGGLRDGYYVDSDACLLFFDVTNRVTYKNVESWYRDVFRICPTRRDASTGEEKPLAIVLVGNKCDVKDREIRTQTVKFHRSKNIPYVEISAKDNFNYELPILSILRTLLNDPTIQFSQAPALLPADIGMDAATREQINKDLEAVNNVPLPDDD</sequence>